<dbReference type="EC" id="2.1.1.-" evidence="5"/>
<dbReference type="EMBL" id="AJ278574">
    <property type="protein sequence ID" value="CAC20695.1"/>
    <property type="molecule type" value="Genomic_DNA"/>
</dbReference>
<dbReference type="EMBL" id="AJ278579">
    <property type="protein sequence ID" value="CAC21450.1"/>
    <property type="molecule type" value="Genomic_DNA"/>
</dbReference>
<dbReference type="EMBL" id="AJ278580">
    <property type="protein sequence ID" value="CAC21450.1"/>
    <property type="status" value="JOINED"/>
    <property type="molecule type" value="Genomic_DNA"/>
</dbReference>
<dbReference type="EMBL" id="AJ278576">
    <property type="protein sequence ID" value="CAC20698.1"/>
    <property type="molecule type" value="mRNA"/>
</dbReference>
<dbReference type="EMBL" id="AB041664">
    <property type="protein sequence ID" value="BAA95109.1"/>
    <property type="status" value="ALT_FRAME"/>
    <property type="molecule type" value="mRNA"/>
</dbReference>
<dbReference type="EMBL" id="BC023188">
    <property type="protein sequence ID" value="AAH23188.1"/>
    <property type="status" value="ALT_INIT"/>
    <property type="molecule type" value="mRNA"/>
</dbReference>
<dbReference type="EMBL" id="BC068124">
    <property type="protein sequence ID" value="AAH68124.1"/>
    <property type="molecule type" value="mRNA"/>
</dbReference>
<dbReference type="EMBL" id="BC082317">
    <property type="protein sequence ID" value="AAH82317.1"/>
    <property type="molecule type" value="mRNA"/>
</dbReference>
<dbReference type="EMBL" id="AK169951">
    <property type="protein sequence ID" value="BAE41478.1"/>
    <property type="molecule type" value="mRNA"/>
</dbReference>
<dbReference type="CCDS" id="CCDS21800.1"/>
<dbReference type="RefSeq" id="NP_067529.2">
    <property type="nucleotide sequence ID" value="NM_021554.2"/>
</dbReference>
<dbReference type="SMR" id="Q9EPL4"/>
<dbReference type="BioGRID" id="208515">
    <property type="interactions" value="3"/>
</dbReference>
<dbReference type="FunCoup" id="Q9EPL4">
    <property type="interactions" value="2379"/>
</dbReference>
<dbReference type="IntAct" id="Q9EPL4">
    <property type="interactions" value="1"/>
</dbReference>
<dbReference type="STRING" id="10090.ENSMUSP00000033163"/>
<dbReference type="GlyCosmos" id="Q9EPL4">
    <property type="glycosylation" value="1 site, No reported glycans"/>
</dbReference>
<dbReference type="GlyGen" id="Q9EPL4">
    <property type="glycosylation" value="1 site, 1 N-linked glycan (1 site)"/>
</dbReference>
<dbReference type="iPTMnet" id="Q9EPL4"/>
<dbReference type="PhosphoSitePlus" id="Q9EPL4"/>
<dbReference type="PaxDb" id="10090-ENSMUSP00000033163"/>
<dbReference type="PeptideAtlas" id="Q9EPL4"/>
<dbReference type="ProteomicsDB" id="292223"/>
<dbReference type="Pumba" id="Q9EPL4"/>
<dbReference type="Antibodypedia" id="25721">
    <property type="antibodies" value="22 antibodies from 11 providers"/>
</dbReference>
<dbReference type="DNASU" id="59052"/>
<dbReference type="Ensembl" id="ENSMUST00000033163.8">
    <property type="protein sequence ID" value="ENSMUSP00000033163.7"/>
    <property type="gene ID" value="ENSMUSG00000030876.8"/>
</dbReference>
<dbReference type="GeneID" id="59052"/>
<dbReference type="KEGG" id="mmu:59052"/>
<dbReference type="UCSC" id="uc009jnk.1">
    <property type="organism name" value="mouse"/>
</dbReference>
<dbReference type="AGR" id="MGI:1914862"/>
<dbReference type="CTD" id="51108"/>
<dbReference type="MGI" id="MGI:1914862">
    <property type="gene designation" value="Mettl9"/>
</dbReference>
<dbReference type="VEuPathDB" id="HostDB:ENSMUSG00000030876"/>
<dbReference type="eggNOG" id="KOG3987">
    <property type="taxonomic scope" value="Eukaryota"/>
</dbReference>
<dbReference type="GeneTree" id="ENSGT00390000013648"/>
<dbReference type="HOGENOM" id="CLU_056100_0_0_1"/>
<dbReference type="InParanoid" id="Q9EPL4"/>
<dbReference type="OMA" id="VEIGGKW"/>
<dbReference type="OrthoDB" id="199041at2759"/>
<dbReference type="PhylomeDB" id="Q9EPL4"/>
<dbReference type="TreeFam" id="TF314187"/>
<dbReference type="BioGRID-ORCS" id="59052">
    <property type="hits" value="3 hits in 78 CRISPR screens"/>
</dbReference>
<dbReference type="ChiTaRS" id="Mettl9">
    <property type="organism name" value="mouse"/>
</dbReference>
<dbReference type="PRO" id="PR:Q9EPL4"/>
<dbReference type="Proteomes" id="UP000000589">
    <property type="component" value="Chromosome 7"/>
</dbReference>
<dbReference type="RNAct" id="Q9EPL4">
    <property type="molecule type" value="protein"/>
</dbReference>
<dbReference type="Bgee" id="ENSMUSG00000030876">
    <property type="expression patterns" value="Expressed in gastrula and 259 other cell types or tissues"/>
</dbReference>
<dbReference type="ExpressionAtlas" id="Q9EPL4">
    <property type="expression patterns" value="baseline and differential"/>
</dbReference>
<dbReference type="GO" id="GO:0005783">
    <property type="term" value="C:endoplasmic reticulum"/>
    <property type="evidence" value="ECO:0000250"/>
    <property type="project" value="UniProtKB"/>
</dbReference>
<dbReference type="GO" id="GO:0005739">
    <property type="term" value="C:mitochondrion"/>
    <property type="evidence" value="ECO:0007669"/>
    <property type="project" value="UniProtKB-SubCell"/>
</dbReference>
<dbReference type="GO" id="GO:0106370">
    <property type="term" value="F:protein-L-histidine N-pros-methyltransferase activity"/>
    <property type="evidence" value="ECO:0000314"/>
    <property type="project" value="UniProtKB"/>
</dbReference>
<dbReference type="GO" id="GO:0032259">
    <property type="term" value="P:methylation"/>
    <property type="evidence" value="ECO:0007669"/>
    <property type="project" value="UniProtKB-KW"/>
</dbReference>
<dbReference type="CDD" id="cd02440">
    <property type="entry name" value="AdoMet_MTases"/>
    <property type="match status" value="1"/>
</dbReference>
<dbReference type="Gene3D" id="3.40.50.150">
    <property type="entry name" value="Vaccinia Virus protein VP39"/>
    <property type="match status" value="1"/>
</dbReference>
<dbReference type="InterPro" id="IPR007884">
    <property type="entry name" value="METL9"/>
</dbReference>
<dbReference type="InterPro" id="IPR029063">
    <property type="entry name" value="SAM-dependent_MTases_sf"/>
</dbReference>
<dbReference type="PANTHER" id="PTHR12890">
    <property type="entry name" value="DREV PROTEIN"/>
    <property type="match status" value="1"/>
</dbReference>
<dbReference type="PANTHER" id="PTHR12890:SF0">
    <property type="entry name" value="PROTEIN-L-HISTIDINE N-PROS-METHYLTRANSFERASE"/>
    <property type="match status" value="1"/>
</dbReference>
<dbReference type="Pfam" id="PF05219">
    <property type="entry name" value="DREV"/>
    <property type="match status" value="1"/>
</dbReference>
<dbReference type="SUPFAM" id="SSF53335">
    <property type="entry name" value="S-adenosyl-L-methionine-dependent methyltransferases"/>
    <property type="match status" value="1"/>
</dbReference>
<reference key="1">
    <citation type="journal article" date="2000" name="Immunogenetics">
        <title>The mouse and human IGSF6 (DORA) genes map to the inflammatory bowel disease 1 locus and are embedded in an intron of a gene of unknown function.</title>
        <authorList>
            <person name="Bates E.E.M."/>
            <person name="Kissenpfennig A."/>
            <person name="Peronne C."/>
            <person name="Mattei M.-G."/>
            <person name="Fossiez F."/>
            <person name="Malissen B."/>
            <person name="Lebecque S."/>
        </authorList>
    </citation>
    <scope>NUCLEOTIDE SEQUENCE [MRNA]</scope>
    <scope>NUCLEOTIDE SEQUENCE [GENOMIC DNA] OF 120-318</scope>
    <scope>TISSUE SPECIFICITY</scope>
    <source>
        <strain>129/Ola</strain>
    </source>
</reference>
<reference key="2">
    <citation type="submission" date="2000-04" db="EMBL/GenBank/DDBJ databases">
        <title>Isolation of full-length cDNA clones from mouse brain cDNA library made by oligo-capping method.</title>
        <authorList>
            <person name="Osada N."/>
            <person name="Kusuda J."/>
            <person name="Tanuma R."/>
            <person name="Ito A."/>
            <person name="Hirata M."/>
            <person name="Sugano S."/>
            <person name="Hashimoto K."/>
        </authorList>
    </citation>
    <scope>NUCLEOTIDE SEQUENCE [LARGE SCALE MRNA]</scope>
    <source>
        <strain>C57BL/6J</strain>
        <tissue>Brain</tissue>
    </source>
</reference>
<reference key="3">
    <citation type="journal article" date="2004" name="Genome Res.">
        <title>The status, quality, and expansion of the NIH full-length cDNA project: the Mammalian Gene Collection (MGC).</title>
        <authorList>
            <consortium name="The MGC Project Team"/>
        </authorList>
    </citation>
    <scope>NUCLEOTIDE SEQUENCE [LARGE SCALE MRNA]</scope>
    <source>
        <strain>C57BL/6J</strain>
        <strain>FVB/N</strain>
        <tissue>Brain</tissue>
        <tissue>Mammary tumor</tissue>
    </source>
</reference>
<reference key="4">
    <citation type="journal article" date="2005" name="Science">
        <title>The transcriptional landscape of the mammalian genome.</title>
        <authorList>
            <person name="Carninci P."/>
            <person name="Kasukawa T."/>
            <person name="Katayama S."/>
            <person name="Gough J."/>
            <person name="Frith M.C."/>
            <person name="Maeda N."/>
            <person name="Oyama R."/>
            <person name="Ravasi T."/>
            <person name="Lenhard B."/>
            <person name="Wells C."/>
            <person name="Kodzius R."/>
            <person name="Shimokawa K."/>
            <person name="Bajic V.B."/>
            <person name="Brenner S.E."/>
            <person name="Batalov S."/>
            <person name="Forrest A.R."/>
            <person name="Zavolan M."/>
            <person name="Davis M.J."/>
            <person name="Wilming L.G."/>
            <person name="Aidinis V."/>
            <person name="Allen J.E."/>
            <person name="Ambesi-Impiombato A."/>
            <person name="Apweiler R."/>
            <person name="Aturaliya R.N."/>
            <person name="Bailey T.L."/>
            <person name="Bansal M."/>
            <person name="Baxter L."/>
            <person name="Beisel K.W."/>
            <person name="Bersano T."/>
            <person name="Bono H."/>
            <person name="Chalk A.M."/>
            <person name="Chiu K.P."/>
            <person name="Choudhary V."/>
            <person name="Christoffels A."/>
            <person name="Clutterbuck D.R."/>
            <person name="Crowe M.L."/>
            <person name="Dalla E."/>
            <person name="Dalrymple B.P."/>
            <person name="de Bono B."/>
            <person name="Della Gatta G."/>
            <person name="di Bernardo D."/>
            <person name="Down T."/>
            <person name="Engstrom P."/>
            <person name="Fagiolini M."/>
            <person name="Faulkner G."/>
            <person name="Fletcher C.F."/>
            <person name="Fukushima T."/>
            <person name="Furuno M."/>
            <person name="Futaki S."/>
            <person name="Gariboldi M."/>
            <person name="Georgii-Hemming P."/>
            <person name="Gingeras T.R."/>
            <person name="Gojobori T."/>
            <person name="Green R.E."/>
            <person name="Gustincich S."/>
            <person name="Harbers M."/>
            <person name="Hayashi Y."/>
            <person name="Hensch T.K."/>
            <person name="Hirokawa N."/>
            <person name="Hill D."/>
            <person name="Huminiecki L."/>
            <person name="Iacono M."/>
            <person name="Ikeo K."/>
            <person name="Iwama A."/>
            <person name="Ishikawa T."/>
            <person name="Jakt M."/>
            <person name="Kanapin A."/>
            <person name="Katoh M."/>
            <person name="Kawasawa Y."/>
            <person name="Kelso J."/>
            <person name="Kitamura H."/>
            <person name="Kitano H."/>
            <person name="Kollias G."/>
            <person name="Krishnan S.P."/>
            <person name="Kruger A."/>
            <person name="Kummerfeld S.K."/>
            <person name="Kurochkin I.V."/>
            <person name="Lareau L.F."/>
            <person name="Lazarevic D."/>
            <person name="Lipovich L."/>
            <person name="Liu J."/>
            <person name="Liuni S."/>
            <person name="McWilliam S."/>
            <person name="Madan Babu M."/>
            <person name="Madera M."/>
            <person name="Marchionni L."/>
            <person name="Matsuda H."/>
            <person name="Matsuzawa S."/>
            <person name="Miki H."/>
            <person name="Mignone F."/>
            <person name="Miyake S."/>
            <person name="Morris K."/>
            <person name="Mottagui-Tabar S."/>
            <person name="Mulder N."/>
            <person name="Nakano N."/>
            <person name="Nakauchi H."/>
            <person name="Ng P."/>
            <person name="Nilsson R."/>
            <person name="Nishiguchi S."/>
            <person name="Nishikawa S."/>
            <person name="Nori F."/>
            <person name="Ohara O."/>
            <person name="Okazaki Y."/>
            <person name="Orlando V."/>
            <person name="Pang K.C."/>
            <person name="Pavan W.J."/>
            <person name="Pavesi G."/>
            <person name="Pesole G."/>
            <person name="Petrovsky N."/>
            <person name="Piazza S."/>
            <person name="Reed J."/>
            <person name="Reid J.F."/>
            <person name="Ring B.Z."/>
            <person name="Ringwald M."/>
            <person name="Rost B."/>
            <person name="Ruan Y."/>
            <person name="Salzberg S.L."/>
            <person name="Sandelin A."/>
            <person name="Schneider C."/>
            <person name="Schoenbach C."/>
            <person name="Sekiguchi K."/>
            <person name="Semple C.A."/>
            <person name="Seno S."/>
            <person name="Sessa L."/>
            <person name="Sheng Y."/>
            <person name="Shibata Y."/>
            <person name="Shimada H."/>
            <person name="Shimada K."/>
            <person name="Silva D."/>
            <person name="Sinclair B."/>
            <person name="Sperling S."/>
            <person name="Stupka E."/>
            <person name="Sugiura K."/>
            <person name="Sultana R."/>
            <person name="Takenaka Y."/>
            <person name="Taki K."/>
            <person name="Tammoja K."/>
            <person name="Tan S.L."/>
            <person name="Tang S."/>
            <person name="Taylor M.S."/>
            <person name="Tegner J."/>
            <person name="Teichmann S.A."/>
            <person name="Ueda H.R."/>
            <person name="van Nimwegen E."/>
            <person name="Verardo R."/>
            <person name="Wei C.L."/>
            <person name="Yagi K."/>
            <person name="Yamanishi H."/>
            <person name="Zabarovsky E."/>
            <person name="Zhu S."/>
            <person name="Zimmer A."/>
            <person name="Hide W."/>
            <person name="Bult C."/>
            <person name="Grimmond S.M."/>
            <person name="Teasdale R.D."/>
            <person name="Liu E.T."/>
            <person name="Brusic V."/>
            <person name="Quackenbush J."/>
            <person name="Wahlestedt C."/>
            <person name="Mattick J.S."/>
            <person name="Hume D.A."/>
            <person name="Kai C."/>
            <person name="Sasaki D."/>
            <person name="Tomaru Y."/>
            <person name="Fukuda S."/>
            <person name="Kanamori-Katayama M."/>
            <person name="Suzuki M."/>
            <person name="Aoki J."/>
            <person name="Arakawa T."/>
            <person name="Iida J."/>
            <person name="Imamura K."/>
            <person name="Itoh M."/>
            <person name="Kato T."/>
            <person name="Kawaji H."/>
            <person name="Kawagashira N."/>
            <person name="Kawashima T."/>
            <person name="Kojima M."/>
            <person name="Kondo S."/>
            <person name="Konno H."/>
            <person name="Nakano K."/>
            <person name="Ninomiya N."/>
            <person name="Nishio T."/>
            <person name="Okada M."/>
            <person name="Plessy C."/>
            <person name="Shibata K."/>
            <person name="Shiraki T."/>
            <person name="Suzuki S."/>
            <person name="Tagami M."/>
            <person name="Waki K."/>
            <person name="Watahiki A."/>
            <person name="Okamura-Oho Y."/>
            <person name="Suzuki H."/>
            <person name="Kawai J."/>
            <person name="Hayashizaki Y."/>
        </authorList>
    </citation>
    <scope>NUCLEOTIDE SEQUENCE [LARGE SCALE MRNA] OF 74-318</scope>
    <source>
        <strain>NOD</strain>
    </source>
</reference>
<reference key="5">
    <citation type="journal article" date="2010" name="Cell">
        <title>A tissue-specific atlas of mouse protein phosphorylation and expression.</title>
        <authorList>
            <person name="Huttlin E.L."/>
            <person name="Jedrychowski M.P."/>
            <person name="Elias J.E."/>
            <person name="Goswami T."/>
            <person name="Rad R."/>
            <person name="Beausoleil S.A."/>
            <person name="Villen J."/>
            <person name="Haas W."/>
            <person name="Sowa M.E."/>
            <person name="Gygi S.P."/>
        </authorList>
    </citation>
    <scope>IDENTIFICATION BY MASS SPECTROMETRY [LARGE SCALE ANALYSIS]</scope>
    <source>
        <tissue>Heart</tissue>
        <tissue>Liver</tissue>
    </source>
</reference>
<reference key="6">
    <citation type="journal article" date="2021" name="Nat. Commun.">
        <title>The methyltransferase METTL9 mediates pervasive 1-methylhistidine modification in mammalian proteomes.</title>
        <authorList>
            <person name="Davydova E."/>
            <person name="Shimazu T."/>
            <person name="Schuhmacher M.K."/>
            <person name="Jakobsson M.E."/>
            <person name="Willemen H.L.D.M."/>
            <person name="Liu T."/>
            <person name="Moen A."/>
            <person name="Ho A.Y.Y."/>
            <person name="Malecki J."/>
            <person name="Schroer L."/>
            <person name="Pinto R."/>
            <person name="Suzuki T."/>
            <person name="Groensberg I.A."/>
            <person name="Sohtome Y."/>
            <person name="Akakabe M."/>
            <person name="Weirich S."/>
            <person name="Kikuchi M."/>
            <person name="Olsen J.V."/>
            <person name="Dohmae N."/>
            <person name="Umehara T."/>
            <person name="Sodeoka M."/>
            <person name="Siino V."/>
            <person name="McDonough M.A."/>
            <person name="Eijkelkamp N."/>
            <person name="Schofield C.J."/>
            <person name="Jeltsch A."/>
            <person name="Shinkai Y."/>
            <person name="Falnes P.O."/>
        </authorList>
    </citation>
    <scope>FUNCTION</scope>
</reference>
<reference key="7">
    <citation type="journal article" date="2021" name="Protein Cell">
        <title>METTL9 mediated N1-histidine methylation of zinc transporters is required for tumor growth.</title>
        <authorList>
            <person name="Lv M."/>
            <person name="Cao D."/>
            <person name="Zhang L."/>
            <person name="Hu C."/>
            <person name="Li S."/>
            <person name="Zhang P."/>
            <person name="Zhu L."/>
            <person name="Yi X."/>
            <person name="Li C."/>
            <person name="Yang A."/>
            <person name="Yang Z."/>
            <person name="Zhu Y."/>
            <person name="Zhang K."/>
            <person name="Pan W."/>
        </authorList>
    </citation>
    <scope>FUNCTION</scope>
    <scope>CATALYTIC ACTIVITY</scope>
    <scope>MUTAGENESIS OF ASP-151; GLY-153; GLY-155; LEU-175; ILE-180 AND ASP-204</scope>
</reference>
<gene>
    <name evidence="7 10" type="primary">Mettl9</name>
    <name evidence="6" type="synonym">drev</name>
    <name evidence="8" type="ORF">MNCb-5680</name>
</gene>
<feature type="signal peptide" evidence="2">
    <location>
        <begin position="1"/>
        <end position="18"/>
    </location>
</feature>
<feature type="chain" id="PRO_0000317491" description="Protein-L-histidine N-pros-methyltransferase">
    <location>
        <begin position="19"/>
        <end position="318"/>
    </location>
</feature>
<feature type="binding site" evidence="1">
    <location>
        <position position="174"/>
    </location>
    <ligand>
        <name>S-adenosyl-L-homocysteine</name>
        <dbReference type="ChEBI" id="CHEBI:57856"/>
    </ligand>
</feature>
<feature type="binding site" evidence="1">
    <location>
        <position position="210"/>
    </location>
    <ligand>
        <name>S-adenosyl-L-homocysteine</name>
        <dbReference type="ChEBI" id="CHEBI:57856"/>
    </ligand>
</feature>
<feature type="binding site" evidence="1">
    <location>
        <position position="295"/>
    </location>
    <ligand>
        <name>S-adenosyl-L-homocysteine</name>
        <dbReference type="ChEBI" id="CHEBI:57856"/>
    </ligand>
</feature>
<feature type="glycosylation site" description="N-linked (GlcNAc...) asparagine" evidence="2">
    <location>
        <position position="35"/>
    </location>
</feature>
<feature type="mutagenesis site" description="Abolished protein-histidine N-methyltransferase activity." evidence="5">
    <original>D</original>
    <variation>A</variation>
    <location>
        <position position="151"/>
    </location>
</feature>
<feature type="mutagenesis site" description="Abolished protein-histidine N-methyltransferase activity." evidence="5">
    <original>G</original>
    <variation>R</variation>
    <location>
        <position position="153"/>
    </location>
</feature>
<feature type="mutagenesis site" description="Abolished protein-histidine N-methyltransferase activity." evidence="5">
    <original>G</original>
    <variation>R</variation>
    <location>
        <position position="155"/>
    </location>
</feature>
<feature type="mutagenesis site" description="Reduced protein-histidine N-methyltransferase activity." evidence="5">
    <original>L</original>
    <variation>A</variation>
    <location>
        <position position="175"/>
    </location>
</feature>
<feature type="mutagenesis site" description="Reduced protein-histidine N-methyltransferase activity." evidence="5">
    <original>I</original>
    <variation>A</variation>
    <location>
        <position position="180"/>
    </location>
</feature>
<feature type="mutagenesis site" description="Abolished protein-histidine N-methyltransferase activity." evidence="5">
    <original>D</original>
    <variation>A</variation>
    <location>
        <position position="204"/>
    </location>
</feature>
<feature type="sequence conflict" description="In Ref. 4; BAE41478." evidence="9" ref="4">
    <original>S</original>
    <variation>F</variation>
    <location>
        <position position="102"/>
    </location>
</feature>
<feature type="sequence conflict" description="In Ref. 2; BAA95109." evidence="9" ref="2">
    <original>F</original>
    <variation>S</variation>
    <location>
        <position position="167"/>
    </location>
</feature>
<feature type="sequence conflict" description="In Ref. 2; BAA95109." evidence="9" ref="2">
    <original>K</original>
    <variation>R</variation>
    <location>
        <position position="185"/>
    </location>
</feature>
<feature type="sequence conflict" description="In Ref. 2; BAA95109." evidence="9" ref="2">
    <original>K</original>
    <variation>E</variation>
    <location>
        <position position="265"/>
    </location>
</feature>
<proteinExistence type="evidence at protein level"/>
<comment type="function">
    <text evidence="4 5">Protein-histidine N-methyltransferase that specifically catalyzes 1-methylhistidine (pros-methylhistidine) methylation of target proteins (PubMed:33563959, PubMed:34218407). Specifically methylates the second His of proteins with a His-x-His (HxH) motif (where 'x' is preferably a small amino acid), while exploiting the first one as a recognition signature (PubMed:33563959, PubMed:34218407). Catalyzes methylation of target proteins such as S100A9, NDUFB3, SLC39A5, SLC39A7, ARMC6 and DNAJB12; 1-methylhistidine modification may affect the binding of zinc and other metals to its target proteins (PubMed:33563959, PubMed:34218407). Constitutes the main methyltransferase for the 1-methylhistidine modification in cell (PubMed:33563959).</text>
</comment>
<comment type="catalytic activity">
    <reaction evidence="5">
        <text>L-histidyl-[protein] + S-adenosyl-L-methionine = N(pros)-methyl-L-histidyl-[protein] + S-adenosyl-L-homocysteine + H(+)</text>
        <dbReference type="Rhea" id="RHEA:67076"/>
        <dbReference type="Rhea" id="RHEA-COMP:9745"/>
        <dbReference type="Rhea" id="RHEA-COMP:17184"/>
        <dbReference type="ChEBI" id="CHEBI:15378"/>
        <dbReference type="ChEBI" id="CHEBI:29979"/>
        <dbReference type="ChEBI" id="CHEBI:43903"/>
        <dbReference type="ChEBI" id="CHEBI:57856"/>
        <dbReference type="ChEBI" id="CHEBI:59789"/>
    </reaction>
    <physiologicalReaction direction="left-to-right" evidence="5">
        <dbReference type="Rhea" id="RHEA:67077"/>
    </physiologicalReaction>
</comment>
<comment type="subcellular location">
    <subcellularLocation>
        <location evidence="1">Endoplasmic reticulum</location>
    </subcellularLocation>
    <subcellularLocation>
        <location evidence="1">Mitochondrion</location>
    </subcellularLocation>
    <text evidence="1">Colocalizes with membranous compartments such as the endoplasmic reticulum and mitochondria.</text>
</comment>
<comment type="tissue specificity">
    <text evidence="3">Expressed in liver, colon, small intestine, skin, kidney and to a lesser extent in spleen, lung, thymus and stomach. Not detected in fibroblast and endothelial cells.</text>
</comment>
<comment type="similarity">
    <text evidence="9">Belongs to the METTL9 family.</text>
</comment>
<comment type="sequence caution" evidence="9">
    <conflict type="erroneous initiation">
        <sequence resource="EMBL-CDS" id="AAH23188"/>
    </conflict>
</comment>
<comment type="sequence caution" evidence="9">
    <conflict type="frameshift">
        <sequence resource="EMBL-CDS" id="BAA95109"/>
    </conflict>
</comment>
<protein>
    <recommendedName>
        <fullName evidence="9">Protein-L-histidine N-pros-methyltransferase</fullName>
        <ecNumber evidence="5">2.1.1.-</ecNumber>
    </recommendedName>
    <alternativeName>
        <fullName evidence="6">DORA reverse strand protein</fullName>
        <shortName evidence="6">DREV</shortName>
    </alternativeName>
    <alternativeName>
        <fullName evidence="7">Methyltransferase-like protein 9</fullName>
        <shortName evidence="7">mMETTL9</shortName>
    </alternativeName>
</protein>
<name>METL9_MOUSE</name>
<keyword id="KW-0256">Endoplasmic reticulum</keyword>
<keyword id="KW-0325">Glycoprotein</keyword>
<keyword id="KW-0489">Methyltransferase</keyword>
<keyword id="KW-0496">Mitochondrion</keyword>
<keyword id="KW-1185">Reference proteome</keyword>
<keyword id="KW-0732">Signal</keyword>
<keyword id="KW-0808">Transferase</keyword>
<evidence type="ECO:0000250" key="1">
    <source>
        <dbReference type="UniProtKB" id="Q9H1A3"/>
    </source>
</evidence>
<evidence type="ECO:0000255" key="2"/>
<evidence type="ECO:0000269" key="3">
    <source>
    </source>
</evidence>
<evidence type="ECO:0000269" key="4">
    <source>
    </source>
</evidence>
<evidence type="ECO:0000269" key="5">
    <source>
    </source>
</evidence>
<evidence type="ECO:0000303" key="6">
    <source>
    </source>
</evidence>
<evidence type="ECO:0000303" key="7">
    <source>
    </source>
</evidence>
<evidence type="ECO:0000303" key="8">
    <source ref="2"/>
</evidence>
<evidence type="ECO:0000305" key="9"/>
<evidence type="ECO:0000312" key="10">
    <source>
        <dbReference type="MGI" id="MGI:1914862"/>
    </source>
</evidence>
<organism>
    <name type="scientific">Mus musculus</name>
    <name type="common">Mouse</name>
    <dbReference type="NCBI Taxonomy" id="10090"/>
    <lineage>
        <taxon>Eukaryota</taxon>
        <taxon>Metazoa</taxon>
        <taxon>Chordata</taxon>
        <taxon>Craniata</taxon>
        <taxon>Vertebrata</taxon>
        <taxon>Euteleostomi</taxon>
        <taxon>Mammalia</taxon>
        <taxon>Eutheria</taxon>
        <taxon>Euarchontoglires</taxon>
        <taxon>Glires</taxon>
        <taxon>Rodentia</taxon>
        <taxon>Myomorpha</taxon>
        <taxon>Muroidea</taxon>
        <taxon>Muridae</taxon>
        <taxon>Murinae</taxon>
        <taxon>Mus</taxon>
        <taxon>Mus</taxon>
    </lineage>
</organism>
<sequence>MRLLAGWLCLSLASVWLARRMWTLRSPLSRSLYVNMTSGPGGPAAAAGGGKDTHQWYVCNREKLCESLQSVFVQSYLDQGTQIFLNNSIEKSGWLFIQLYHSFVSSVFSLFMSRTSINGLLGRGSMFVFSPDQFQRLLRINPDWKTHRLLDLGAGDGEVTKIMSPHFEEIYATELSETMIWQLQKKKYRVLGINEWQNTGFQYDVISCLNLLDRCDQPLTLLKDIRSVLEPTQGRVILALVLPFHPYVENVGGKWEKPSEILEIKGQNWEEQVNSLPEVFRKAGFVVEAFTRLPYLCEGDMYNDYYVLDDAVFVLRPV</sequence>
<accession>Q9EPL4</accession>
<accession>A0JG25</accession>
<accession>Q3TDX0</accession>
<accession>Q641L4</accession>
<accession>Q8R567</accession>
<accession>Q9EPL3</accession>
<accession>Q9JJ88</accession>